<feature type="chain" id="PRO_0000283421" description="Putative F-box protein At3g17400">
    <location>
        <begin position="1"/>
        <end position="185"/>
    </location>
</feature>
<feature type="domain" description="F-box" evidence="1">
    <location>
        <begin position="1"/>
        <end position="47"/>
    </location>
</feature>
<accession>Q9LUT1</accession>
<organism>
    <name type="scientific">Arabidopsis thaliana</name>
    <name type="common">Mouse-ear cress</name>
    <dbReference type="NCBI Taxonomy" id="3702"/>
    <lineage>
        <taxon>Eukaryota</taxon>
        <taxon>Viridiplantae</taxon>
        <taxon>Streptophyta</taxon>
        <taxon>Embryophyta</taxon>
        <taxon>Tracheophyta</taxon>
        <taxon>Spermatophyta</taxon>
        <taxon>Magnoliopsida</taxon>
        <taxon>eudicotyledons</taxon>
        <taxon>Gunneridae</taxon>
        <taxon>Pentapetalae</taxon>
        <taxon>rosids</taxon>
        <taxon>malvids</taxon>
        <taxon>Brassicales</taxon>
        <taxon>Brassicaceae</taxon>
        <taxon>Camelineae</taxon>
        <taxon>Arabidopsis</taxon>
    </lineage>
</organism>
<keyword id="KW-1185">Reference proteome</keyword>
<dbReference type="EMBL" id="AB022216">
    <property type="protein sequence ID" value="BAB02744.1"/>
    <property type="molecule type" value="Genomic_DNA"/>
</dbReference>
<dbReference type="EMBL" id="CP002686">
    <property type="protein sequence ID" value="AEE75949.1"/>
    <property type="molecule type" value="Genomic_DNA"/>
</dbReference>
<dbReference type="RefSeq" id="NP_188366.1">
    <property type="nucleotide sequence ID" value="NM_112619.1"/>
</dbReference>
<dbReference type="SMR" id="Q9LUT1"/>
<dbReference type="FunCoup" id="Q9LUT1">
    <property type="interactions" value="16"/>
</dbReference>
<dbReference type="STRING" id="3702.Q9LUT1"/>
<dbReference type="PaxDb" id="3702-AT3G17400.1"/>
<dbReference type="EnsemblPlants" id="AT3G17400.1">
    <property type="protein sequence ID" value="AT3G17400.1"/>
    <property type="gene ID" value="AT3G17400"/>
</dbReference>
<dbReference type="GeneID" id="821004"/>
<dbReference type="Gramene" id="AT3G17400.1">
    <property type="protein sequence ID" value="AT3G17400.1"/>
    <property type="gene ID" value="AT3G17400"/>
</dbReference>
<dbReference type="KEGG" id="ath:AT3G17400"/>
<dbReference type="Araport" id="AT3G17400"/>
<dbReference type="TAIR" id="AT3G17400"/>
<dbReference type="HOGENOM" id="CLU_034692_4_2_1"/>
<dbReference type="InParanoid" id="Q9LUT1"/>
<dbReference type="OMA" id="RATCKKW"/>
<dbReference type="PhylomeDB" id="Q9LUT1"/>
<dbReference type="PRO" id="PR:Q9LUT1"/>
<dbReference type="Proteomes" id="UP000006548">
    <property type="component" value="Chromosome 3"/>
</dbReference>
<dbReference type="ExpressionAtlas" id="Q9LUT1">
    <property type="expression patterns" value="baseline and differential"/>
</dbReference>
<dbReference type="CDD" id="cd22157">
    <property type="entry name" value="F-box_AtFBW1-like"/>
    <property type="match status" value="1"/>
</dbReference>
<dbReference type="Gene3D" id="1.20.1280.50">
    <property type="match status" value="1"/>
</dbReference>
<dbReference type="InterPro" id="IPR036047">
    <property type="entry name" value="F-box-like_dom_sf"/>
</dbReference>
<dbReference type="InterPro" id="IPR001810">
    <property type="entry name" value="F-box_dom"/>
</dbReference>
<dbReference type="InterPro" id="IPR050796">
    <property type="entry name" value="SCF_F-box_component"/>
</dbReference>
<dbReference type="PANTHER" id="PTHR31672">
    <property type="entry name" value="BNACNNG10540D PROTEIN"/>
    <property type="match status" value="1"/>
</dbReference>
<dbReference type="PANTHER" id="PTHR31672:SF13">
    <property type="entry name" value="F-BOX PROTEIN CPR30-LIKE"/>
    <property type="match status" value="1"/>
</dbReference>
<dbReference type="Pfam" id="PF00646">
    <property type="entry name" value="F-box"/>
    <property type="match status" value="1"/>
</dbReference>
<dbReference type="SMART" id="SM00256">
    <property type="entry name" value="FBOX"/>
    <property type="match status" value="1"/>
</dbReference>
<dbReference type="SUPFAM" id="SSF81383">
    <property type="entry name" value="F-box domain"/>
    <property type="match status" value="1"/>
</dbReference>
<dbReference type="PROSITE" id="PS50181">
    <property type="entry name" value="FBOX"/>
    <property type="match status" value="1"/>
</dbReference>
<gene>
    <name type="ordered locus">At3g17400</name>
    <name type="ORF">MGD8.24</name>
</gene>
<proteinExistence type="predicted"/>
<reference key="1">
    <citation type="journal article" date="2000" name="DNA Res.">
        <title>Structural analysis of Arabidopsis thaliana chromosome 3. I. Sequence features of the regions of 4,504,864 bp covered by sixty P1 and TAC clones.</title>
        <authorList>
            <person name="Sato S."/>
            <person name="Nakamura Y."/>
            <person name="Kaneko T."/>
            <person name="Katoh T."/>
            <person name="Asamizu E."/>
            <person name="Tabata S."/>
        </authorList>
    </citation>
    <scope>NUCLEOTIDE SEQUENCE [LARGE SCALE GENOMIC DNA]</scope>
    <source>
        <strain>cv. Columbia</strain>
    </source>
</reference>
<reference key="2">
    <citation type="journal article" date="2017" name="Plant J.">
        <title>Araport11: a complete reannotation of the Arabidopsis thaliana reference genome.</title>
        <authorList>
            <person name="Cheng C.Y."/>
            <person name="Krishnakumar V."/>
            <person name="Chan A.P."/>
            <person name="Thibaud-Nissen F."/>
            <person name="Schobel S."/>
            <person name="Town C.D."/>
        </authorList>
    </citation>
    <scope>GENOME REANNOTATION</scope>
    <source>
        <strain>cv. Columbia</strain>
    </source>
</reference>
<sequence length="185" mass="21344">MMTLSDLPSDLAEEVLSKIPVTSLRGVRATCKKWNTLSKDRSFTRKHLAQAKAAAAREFMVVMVMDFQVYLMGINLHKDVDATINGQGKLISLDDSNQVDISYVYHCDSLVLCIPKDCARLVVWNPYWGQTLWFKPTSLRHFPHWYMYAIGYQMRRGNRDAKTSRWLLTCRPTTKTITKNTIDHL</sequence>
<name>FB151_ARATH</name>
<evidence type="ECO:0000255" key="1">
    <source>
        <dbReference type="PROSITE-ProRule" id="PRU00080"/>
    </source>
</evidence>
<protein>
    <recommendedName>
        <fullName>Putative F-box protein At3g17400</fullName>
    </recommendedName>
</protein>